<keyword id="KW-0007">Acetylation</keyword>
<keyword id="KW-0013">ADP-ribosylation</keyword>
<keyword id="KW-0131">Cell cycle</keyword>
<keyword id="KW-0132">Cell division</keyword>
<keyword id="KW-0158">Chromosome</keyword>
<keyword id="KW-0963">Cytoplasm</keyword>
<keyword id="KW-0206">Cytoskeleton</keyword>
<keyword id="KW-0238">DNA-binding</keyword>
<keyword id="KW-1017">Isopeptide bond</keyword>
<keyword id="KW-0498">Mitosis</keyword>
<keyword id="KW-0539">Nucleus</keyword>
<keyword id="KW-0597">Phosphoprotein</keyword>
<keyword id="KW-0779">Telomere</keyword>
<keyword id="KW-0832">Ubl conjugation</keyword>
<evidence type="ECO:0000250" key="1"/>
<evidence type="ECO:0000250" key="2">
    <source>
        <dbReference type="UniProtKB" id="P54274"/>
    </source>
</evidence>
<evidence type="ECO:0000255" key="3"/>
<evidence type="ECO:0000255" key="4">
    <source>
        <dbReference type="PROSITE-ProRule" id="PRU00625"/>
    </source>
</evidence>
<evidence type="ECO:0000256" key="5">
    <source>
        <dbReference type="SAM" id="MobiDB-lite"/>
    </source>
</evidence>
<organism>
    <name type="scientific">Cricetulus griseus</name>
    <name type="common">Chinese hamster</name>
    <name type="synonym">Cricetulus barabensis griseus</name>
    <dbReference type="NCBI Taxonomy" id="10029"/>
    <lineage>
        <taxon>Eukaryota</taxon>
        <taxon>Metazoa</taxon>
        <taxon>Chordata</taxon>
        <taxon>Craniata</taxon>
        <taxon>Vertebrata</taxon>
        <taxon>Euteleostomi</taxon>
        <taxon>Mammalia</taxon>
        <taxon>Eutheria</taxon>
        <taxon>Euarchontoglires</taxon>
        <taxon>Glires</taxon>
        <taxon>Rodentia</taxon>
        <taxon>Myomorpha</taxon>
        <taxon>Muroidea</taxon>
        <taxon>Cricetidae</taxon>
        <taxon>Cricetinae</taxon>
        <taxon>Cricetulus</taxon>
    </lineage>
</organism>
<name>TERF1_CRIGR</name>
<accession>O55036</accession>
<proteinExistence type="evidence at transcript level"/>
<sequence>MAEDVSSTAPSPRGCADGRDADPTEEQMAQTQRNDQDQFECQELLECQVQVGAPDEEEEEEEDSGLVAEAEAVAAGWMLHFLCLSLCRAFRDGRSEDFRRTRNSAEAIIHGLSSLTACQLRTIYICQFLTRIAAGKTLDAQFENDERITPLESALMIWGSIEKEHDKLHEEIQNLIKIPAIAVCMENGNFKEAEEVFERIFGDPNSHMPFKSKLLMIISQKDTFHSFFQHFSYYHMMEKIKSYVNYVLSEKSSTFLMKAAAKVVESKRTRTITSQDKPSGNDVEMETEANLDTRKSVSDKQSAVTESSEGTVSLLRSHKNLFLSKLQHGTQQQDLNKKERRVGTPQSTKKKKESRRATESRIPVSKSQPVTPEKHRARKRQAWLWEEDKNLRSGVRKYGEGNWSKILLHYKFNNRTSVMLKDRWRTMKKLKLISSDSE</sequence>
<feature type="initiator methionine" description="Removed" evidence="2">
    <location>
        <position position="1"/>
    </location>
</feature>
<feature type="chain" id="PRO_0000197128" description="Telomeric repeat-binding factor 1">
    <location>
        <begin position="2"/>
        <end position="438" status="greater than"/>
    </location>
</feature>
<feature type="domain" description="HTH myb-type" evidence="4">
    <location>
        <begin position="375"/>
        <end position="432"/>
    </location>
</feature>
<feature type="DNA-binding region" description="H-T-H motif" evidence="4">
    <location>
        <begin position="403"/>
        <end position="428"/>
    </location>
</feature>
<feature type="region of interest" description="Disordered" evidence="5">
    <location>
        <begin position="1"/>
        <end position="36"/>
    </location>
</feature>
<feature type="region of interest" description="TRFH dimerization" evidence="1">
    <location>
        <begin position="58"/>
        <end position="268"/>
    </location>
</feature>
<feature type="region of interest" description="Interaction with RLIM" evidence="1">
    <location>
        <begin position="265"/>
        <end position="378"/>
    </location>
</feature>
<feature type="region of interest" description="Disordered" evidence="5">
    <location>
        <begin position="268"/>
        <end position="311"/>
    </location>
</feature>
<feature type="region of interest" description="Disordered" evidence="5">
    <location>
        <begin position="326"/>
        <end position="375"/>
    </location>
</feature>
<feature type="short sequence motif" description="Nuclear localization signal" evidence="3">
    <location>
        <begin position="337"/>
        <end position="356"/>
    </location>
</feature>
<feature type="compositionally biased region" description="Polar residues" evidence="5">
    <location>
        <begin position="1"/>
        <end position="10"/>
    </location>
</feature>
<feature type="compositionally biased region" description="Polar residues" evidence="5">
    <location>
        <begin position="299"/>
        <end position="311"/>
    </location>
</feature>
<feature type="modified residue" description="N-acetylalanine" evidence="2">
    <location>
        <position position="2"/>
    </location>
</feature>
<feature type="modified residue" description="Phosphoserine" evidence="2">
    <location>
        <position position="11"/>
    </location>
</feature>
<feature type="modified residue" description="Phosphoserine; by ATM" evidence="2">
    <location>
        <position position="219"/>
    </location>
</feature>
<feature type="cross-link" description="Glycyl lysine isopeptide (Lys-Gly) (interchain with G-Cter in SUMO2)" evidence="2">
    <location>
        <position position="213"/>
    </location>
</feature>
<feature type="cross-link" description="Glycyl lysine isopeptide (Lys-Gly) (interchain with G-Cter in SUMO2)" evidence="2">
    <location>
        <position position="325"/>
    </location>
</feature>
<feature type="cross-link" description="Glycyl lysine isopeptide (Lys-Gly) (interchain with G-Cter in SUMO2)" evidence="2">
    <location>
        <position position="366"/>
    </location>
</feature>
<feature type="non-terminal residue">
    <location>
        <position position="438"/>
    </location>
</feature>
<gene>
    <name type="primary">TERF1</name>
    <name type="synonym">TRF1</name>
</gene>
<comment type="function">
    <text evidence="1">Binds the telomeric double-stranded 5'-TTAGGG-3' repeat and negatively regulates telomere length. Involved in the regulation of the mitotic spindle. Component of the shelterin complex (telosome) that is involved in the regulation of telomere length and protection. Shelterin associates with arrays of double-stranded 5'-TTAGGG-3' repeats added by telomerase and protects chromosome ends; without its protective activity, telomeres are no longer hidden from the DNA damage surveillance and chromosome ends are inappropriately processed by DNA repair pathways (By similarity).</text>
</comment>
<comment type="subunit">
    <text evidence="1">Homodimer; can contain both isoforms. Found in a complex with POT1; TINF2 and TNKS1. Interacts with ATM, TINF2, TNKS1, TNKS2, PINX1, NEK2 and MAPRE1. Component of the shelterin complex (telosome) composed of TERF1, TERF2, TINF2, TERF2IP ACD and POT1. Interacts with RLIM (via N-terminus). Interacts with FBXO4. Interaction with TINF2 protects against interaction with FBXO4 and subsequent polyubiquitination and proteasomal degradation (By similarity). Interacts with GNL3L; this interaction promotes homodimerization. Interacts with TIN2. Interactions with GNL3L and TIN2 are mutually exclusive (By similarity). Interacts with RTEL1. Interacts with CCDC79/TERB1 (By similarity).</text>
</comment>
<comment type="subcellular location">
    <subcellularLocation>
        <location evidence="4">Nucleus</location>
    </subcellularLocation>
    <subcellularLocation>
        <location evidence="1">Chromosome</location>
        <location evidence="1">Telomere</location>
    </subcellularLocation>
    <subcellularLocation>
        <location evidence="1">Cytoplasm</location>
        <location evidence="1">Cytoskeleton</location>
        <location evidence="1">Spindle</location>
    </subcellularLocation>
    <text evidence="1">Colocalizes with telomeric DNA in interphase and prophase cells. Telomeric localization decreases in metaphase, anaphase and telophase. Associates with the mitotic spindle via its C-terminal domain (By similarity).</text>
</comment>
<comment type="domain">
    <text evidence="1">The acidic N-terminal domain binds to the ankyrin repeats of TNKS1 and TNKS2. The C-terminal domain binds microtubules (By similarity).</text>
</comment>
<comment type="domain">
    <text evidence="1">The TRFH dimerization region mediates the interaction with TINF2.</text>
</comment>
<comment type="PTM">
    <text evidence="1">Phosphorylated preferentially on Ser-219 in an ATM-dependent manner in response to ionizing DNA damage.</text>
</comment>
<comment type="PTM">
    <text evidence="1">ADP-ribosylation by TNKS1 or TNKS2 diminishes its ability to bind to telomeric DNA.</text>
</comment>
<comment type="PTM">
    <text evidence="1">Ubiquitinated by RLIM/RNF12, leading to its degradation by the proteasome. Ubiquitinated by a SCF (SKP1-CUL1-F-box protein) ubiquitin-protein ligase complex, leading to its degradation by the proteasome (By similarity).</text>
</comment>
<protein>
    <recommendedName>
        <fullName>Telomeric repeat-binding factor 1</fullName>
    </recommendedName>
    <alternativeName>
        <fullName>TTAGGG repeat-binding factor 1</fullName>
    </alternativeName>
</protein>
<reference key="1">
    <citation type="journal article" date="1998" name="Oncogene">
        <title>Molecular cloning and chromosomal localization of Chinese hamster telomeric protein chTRF1. Its potential role in chromosomal instability.</title>
        <authorList>
            <person name="Smilenov L.B."/>
            <person name="Mellado W."/>
            <person name="Rao P.H."/>
            <person name="Sawant S.G."/>
            <person name="Umbricht C.B."/>
            <person name="Sukumar S."/>
            <person name="Pandita T.K."/>
        </authorList>
    </citation>
    <scope>NUCLEOTIDE SEQUENCE [MRNA]</scope>
    <source>
        <tissue>Embryo</tissue>
        <tissue>Ovarian carcinoma</tissue>
    </source>
</reference>
<dbReference type="EMBL" id="AF043911">
    <property type="protein sequence ID" value="AAC02531.1"/>
    <property type="molecule type" value="mRNA"/>
</dbReference>
<dbReference type="BMRB" id="O55036"/>
<dbReference type="SMR" id="O55036"/>
<dbReference type="Proteomes" id="UP000694386">
    <property type="component" value="Unplaced"/>
</dbReference>
<dbReference type="Proteomes" id="UP001108280">
    <property type="component" value="Unplaced"/>
</dbReference>
<dbReference type="GO" id="GO:0005737">
    <property type="term" value="C:cytoplasm"/>
    <property type="evidence" value="ECO:0007669"/>
    <property type="project" value="UniProtKB-KW"/>
</dbReference>
<dbReference type="GO" id="GO:0000783">
    <property type="term" value="C:nuclear telomere cap complex"/>
    <property type="evidence" value="ECO:0007669"/>
    <property type="project" value="TreeGrafter"/>
</dbReference>
<dbReference type="GO" id="GO:0005654">
    <property type="term" value="C:nucleoplasm"/>
    <property type="evidence" value="ECO:0007669"/>
    <property type="project" value="UniProtKB-ARBA"/>
</dbReference>
<dbReference type="GO" id="GO:0005634">
    <property type="term" value="C:nucleus"/>
    <property type="evidence" value="ECO:0000250"/>
    <property type="project" value="UniProtKB"/>
</dbReference>
<dbReference type="GO" id="GO:0005819">
    <property type="term" value="C:spindle"/>
    <property type="evidence" value="ECO:0007669"/>
    <property type="project" value="UniProtKB-SubCell"/>
</dbReference>
<dbReference type="GO" id="GO:0071532">
    <property type="term" value="F:ankyrin repeat binding"/>
    <property type="evidence" value="ECO:0007669"/>
    <property type="project" value="TreeGrafter"/>
</dbReference>
<dbReference type="GO" id="GO:0008301">
    <property type="term" value="F:DNA binding, bending"/>
    <property type="evidence" value="ECO:0007669"/>
    <property type="project" value="TreeGrafter"/>
</dbReference>
<dbReference type="GO" id="GO:0003691">
    <property type="term" value="F:double-stranded telomeric DNA binding"/>
    <property type="evidence" value="ECO:0000250"/>
    <property type="project" value="UniProtKB"/>
</dbReference>
<dbReference type="GO" id="GO:0098505">
    <property type="term" value="F:G-rich strand telomeric DNA binding"/>
    <property type="evidence" value="ECO:0007669"/>
    <property type="project" value="TreeGrafter"/>
</dbReference>
<dbReference type="GO" id="GO:0008017">
    <property type="term" value="F:microtubule binding"/>
    <property type="evidence" value="ECO:0007669"/>
    <property type="project" value="TreeGrafter"/>
</dbReference>
<dbReference type="GO" id="GO:0042803">
    <property type="term" value="F:protein homodimerization activity"/>
    <property type="evidence" value="ECO:0007669"/>
    <property type="project" value="InterPro"/>
</dbReference>
<dbReference type="GO" id="GO:0003720">
    <property type="term" value="F:telomerase activity"/>
    <property type="evidence" value="ECO:0007669"/>
    <property type="project" value="TreeGrafter"/>
</dbReference>
<dbReference type="GO" id="GO:0051301">
    <property type="term" value="P:cell division"/>
    <property type="evidence" value="ECO:0007669"/>
    <property type="project" value="UniProtKB-KW"/>
</dbReference>
<dbReference type="GO" id="GO:0008156">
    <property type="term" value="P:negative regulation of DNA replication"/>
    <property type="evidence" value="ECO:0007669"/>
    <property type="project" value="TreeGrafter"/>
</dbReference>
<dbReference type="GO" id="GO:1905839">
    <property type="term" value="P:negative regulation of telomeric D-loop disassembly"/>
    <property type="evidence" value="ECO:0007669"/>
    <property type="project" value="TreeGrafter"/>
</dbReference>
<dbReference type="GO" id="GO:0007004">
    <property type="term" value="P:telomere maintenance via telomerase"/>
    <property type="evidence" value="ECO:0007669"/>
    <property type="project" value="TreeGrafter"/>
</dbReference>
<dbReference type="CDD" id="cd11660">
    <property type="entry name" value="SANT_TRF"/>
    <property type="match status" value="1"/>
</dbReference>
<dbReference type="CDD" id="cd00280">
    <property type="entry name" value="TRFH"/>
    <property type="match status" value="1"/>
</dbReference>
<dbReference type="FunFam" id="1.25.40.210:FF:000001">
    <property type="entry name" value="Telomeric repeat-binding factor"/>
    <property type="match status" value="1"/>
</dbReference>
<dbReference type="FunFam" id="1.10.10.60:FF:000129">
    <property type="entry name" value="Telomeric repeat-binding factor 2"/>
    <property type="match status" value="1"/>
</dbReference>
<dbReference type="Gene3D" id="1.10.10.60">
    <property type="entry name" value="Homeodomain-like"/>
    <property type="match status" value="1"/>
</dbReference>
<dbReference type="Gene3D" id="1.25.40.210">
    <property type="entry name" value="Telomere repeat-binding factor, dimerisation domain"/>
    <property type="match status" value="1"/>
</dbReference>
<dbReference type="InterPro" id="IPR009057">
    <property type="entry name" value="Homeodomain-like_sf"/>
</dbReference>
<dbReference type="InterPro" id="IPR017930">
    <property type="entry name" value="Myb_dom"/>
</dbReference>
<dbReference type="InterPro" id="IPR001005">
    <property type="entry name" value="SANT/Myb"/>
</dbReference>
<dbReference type="InterPro" id="IPR013867">
    <property type="entry name" value="Telomere_rpt-bd_fac_dimer_dom"/>
</dbReference>
<dbReference type="InterPro" id="IPR036507">
    <property type="entry name" value="Telomere_rpt-bd_fac_dimer_sf"/>
</dbReference>
<dbReference type="InterPro" id="IPR017357">
    <property type="entry name" value="TERF1/2"/>
</dbReference>
<dbReference type="InterPro" id="IPR052450">
    <property type="entry name" value="TRBD-Containing_Protein"/>
</dbReference>
<dbReference type="PANTHER" id="PTHR46734:SF3">
    <property type="entry name" value="TELOMERIC REPEAT-BINDING FACTOR 1"/>
    <property type="match status" value="1"/>
</dbReference>
<dbReference type="PANTHER" id="PTHR46734">
    <property type="entry name" value="TELOMERIC REPEAT-BINDING FACTOR 1 TERF1"/>
    <property type="match status" value="1"/>
</dbReference>
<dbReference type="Pfam" id="PF00249">
    <property type="entry name" value="Myb_DNA-binding"/>
    <property type="match status" value="1"/>
</dbReference>
<dbReference type="Pfam" id="PF08558">
    <property type="entry name" value="TRF"/>
    <property type="match status" value="1"/>
</dbReference>
<dbReference type="PIRSF" id="PIRSF038016">
    <property type="entry name" value="Telomere_bd-1_Pin2"/>
    <property type="match status" value="1"/>
</dbReference>
<dbReference type="SMART" id="SM00717">
    <property type="entry name" value="SANT"/>
    <property type="match status" value="1"/>
</dbReference>
<dbReference type="SUPFAM" id="SSF46689">
    <property type="entry name" value="Homeodomain-like"/>
    <property type="match status" value="1"/>
</dbReference>
<dbReference type="SUPFAM" id="SSF63600">
    <property type="entry name" value="Telomeric repeat binding factor (TRF) dimerisation domain"/>
    <property type="match status" value="1"/>
</dbReference>
<dbReference type="PROSITE" id="PS51294">
    <property type="entry name" value="HTH_MYB"/>
    <property type="match status" value="1"/>
</dbReference>